<organism>
    <name type="scientific">Sendai virus (strain Fushimi)</name>
    <name type="common">SeV</name>
    <dbReference type="NCBI Taxonomy" id="11195"/>
    <lineage>
        <taxon>Viruses</taxon>
        <taxon>Riboviria</taxon>
        <taxon>Orthornavirae</taxon>
        <taxon>Negarnaviricota</taxon>
        <taxon>Haploviricotina</taxon>
        <taxon>Monjiviricetes</taxon>
        <taxon>Mononegavirales</taxon>
        <taxon>Paramyxoviridae</taxon>
        <taxon>Feraresvirinae</taxon>
        <taxon>Respirovirus</taxon>
        <taxon>Respirovirus muris</taxon>
    </lineage>
</organism>
<accession>P69284</accession>
<dbReference type="EMBL" id="X17008">
    <property type="status" value="NOT_ANNOTATED_CDS"/>
    <property type="molecule type" value="Genomic_RNA"/>
</dbReference>
<dbReference type="SMR" id="P69284"/>
<dbReference type="DIP" id="DIP-44949N"/>
<dbReference type="IntAct" id="P69284">
    <property type="interactions" value="9"/>
</dbReference>
<dbReference type="Proteomes" id="UP000006825">
    <property type="component" value="Genome"/>
</dbReference>
<dbReference type="GO" id="GO:0030430">
    <property type="term" value="C:host cell cytoplasm"/>
    <property type="evidence" value="ECO:0007669"/>
    <property type="project" value="UniProtKB-SubCell"/>
</dbReference>
<dbReference type="GO" id="GO:0046872">
    <property type="term" value="F:metal ion binding"/>
    <property type="evidence" value="ECO:0007669"/>
    <property type="project" value="UniProtKB-KW"/>
</dbReference>
<dbReference type="GO" id="GO:0039548">
    <property type="term" value="P:symbiont-mediated suppression of host cytoplasmic pattern recognition receptor signaling pathway via inhibition of IRF3 activity"/>
    <property type="evidence" value="ECO:0007669"/>
    <property type="project" value="UniProtKB-KW"/>
</dbReference>
<dbReference type="GO" id="GO:0039554">
    <property type="term" value="P:symbiont-mediated suppression of host cytoplasmic pattern recognition receptor signaling pathway via inhibition of MDA-5 activity"/>
    <property type="evidence" value="ECO:0007669"/>
    <property type="project" value="UniProtKB-KW"/>
</dbReference>
<dbReference type="FunFam" id="4.10.80.340:FF:000001">
    <property type="entry name" value="Protein V"/>
    <property type="match status" value="1"/>
</dbReference>
<dbReference type="Gene3D" id="4.10.80.340">
    <property type="match status" value="1"/>
</dbReference>
<dbReference type="InterPro" id="IPR024279">
    <property type="entry name" value="Paramyx_V_Zn-bd"/>
</dbReference>
<dbReference type="Pfam" id="PF13008">
    <property type="entry name" value="zf-Paramyx-P"/>
    <property type="match status" value="1"/>
</dbReference>
<organismHost>
    <name type="scientific">Cavia cutleri</name>
    <name type="common">Guinea pig</name>
    <dbReference type="NCBI Taxonomy" id="10144"/>
</organismHost>
<organismHost>
    <name type="scientific">Cricetidae sp.</name>
    <name type="common">Hamster</name>
    <dbReference type="NCBI Taxonomy" id="36483"/>
</organismHost>
<organismHost>
    <name type="scientific">Mus musculus</name>
    <name type="common">Mouse</name>
    <dbReference type="NCBI Taxonomy" id="10090"/>
</organismHost>
<organismHost>
    <name type="scientific">Rattus norvegicus</name>
    <name type="common">Rat</name>
    <dbReference type="NCBI Taxonomy" id="10116"/>
</organismHost>
<evidence type="ECO:0000250" key="1"/>
<evidence type="ECO:0000250" key="2">
    <source>
        <dbReference type="UniProtKB" id="P69280"/>
    </source>
</evidence>
<evidence type="ECO:0000250" key="3">
    <source>
        <dbReference type="UniProtKB" id="P69282"/>
    </source>
</evidence>
<evidence type="ECO:0000256" key="4">
    <source>
        <dbReference type="SAM" id="MobiDB-lite"/>
    </source>
</evidence>
<evidence type="ECO:0000305" key="5"/>
<gene>
    <name type="primary">P/V/C</name>
</gene>
<protein>
    <recommendedName>
        <fullName>Protein V</fullName>
    </recommendedName>
</protein>
<proteinExistence type="inferred from homology"/>
<keyword id="KW-1035">Host cytoplasm</keyword>
<keyword id="KW-0945">Host-virus interaction</keyword>
<keyword id="KW-1090">Inhibition of host innate immune response by virus</keyword>
<keyword id="KW-1092">Inhibition of host IRF3 by virus</keyword>
<keyword id="KW-1089">Inhibition of host MDA5 by virus</keyword>
<keyword id="KW-1113">Inhibition of host RLR pathway by virus</keyword>
<keyword id="KW-0922">Interferon antiviral system evasion</keyword>
<keyword id="KW-0479">Metal-binding</keyword>
<keyword id="KW-0597">Phosphoprotein</keyword>
<keyword id="KW-0691">RNA editing</keyword>
<keyword id="KW-0899">Viral immunoevasion</keyword>
<keyword id="KW-0862">Zinc</keyword>
<name>V_SENDF</name>
<reference key="1">
    <citation type="journal article" date="1989" name="Nucleic Acids Res.">
        <title>Cloning and sequencing of the polymerase gene (P) of Sendai virus (strain Fushimi).</title>
        <authorList>
            <person name="Neubert W.J."/>
        </authorList>
    </citation>
    <scope>NUCLEOTIDE SEQUENCE [GENOMIC RNA]</scope>
</reference>
<sequence>MDQDAFILKEDSEVEREAPGGRESLSDVIGFLDAVLSSEPTDIGGDRSWLHNTINTPQGPGSAHRAKSEGEGEVSTPSTQDNRSGEESRVSGRTSKPEAEAHAGNLDKQNIHRAFGGRTGTNSVSQDLGDGGDSGILENPPNERGYPRSGIEDENREMAAHPDKRGEDQAEGLPEEVRGGTSLPDEGEGGASNNGRSMEPGSSHSARVTGVLVIPSPELEEAVLRRNKRRPTNSGSKPLTPATVPGTRSPPLNRYNSTGSPPGKPPSTQDEHINSGDTPAVRVKDRKPPIGTRSVSDCPANGRPIHPGLETDSTKKGHRREHIIYERDGYIVDESWCNPVCSRIRVIPRRELCVCKTCPKVCKLCRDDIQCMRPDPFCREIFRS</sequence>
<comment type="function">
    <text evidence="2 3">Plays an essential role in the inhibition of host immune response. Prevents the establishment of cellular antiviral state by blocking interferon-alpha/beta (IFN-alpha/beta) production and signaling pathway. Interacts with host IFIH1/MDA5 and DHX58/LGP2 to inhibit the transduction pathway involved in the activation of IFN-beta promoter, thus protecting the virus against cell antiviral state (By similarity). Also interacts with and inhibits host IRF3 (By similarity). Blocks the type I interferon signaling pathway by disrupting the RIG-I signaling pathway (By similarity).</text>
</comment>
<comment type="subunit">
    <text evidence="3">Interacts with host IFIH1/MDA5 and DHX58/LGP2. Interacts with host IRF3. Interacts with host RIGI regulatory protein (via CARDs domain) and host TRIM25 (via SPRY domain); these interactions prevent TRIM25-mediated ubiquitination of RIG-I and disrupts downstream RIG-I signaling.</text>
</comment>
<comment type="subcellular location">
    <subcellularLocation>
        <location evidence="1">Host cytoplasm</location>
    </subcellularLocation>
</comment>
<comment type="domain">
    <text evidence="1">The C-terminal zinc-binding domain is involved in binding to IFIH1/MDA5. This domain is also involved in viral pathogenesis (By similarity).</text>
</comment>
<comment type="RNA editing">
    <location>
        <position position="318"/>
    </location>
    <text>Partially edited. RNA editing at this position consists of an insertion of one or two guanine nucleotides. The sequence displayed here is the V protein, derived from the +1G edited RNA. The unedited RNA gives rise to the P protein (AC P14252), the +2G edited RNA gives rise to the W protein (AC P69285).</text>
</comment>
<comment type="miscellaneous">
    <text>The P/V/C gene has two overlapping open reading frames. One encodes the P/V/W proteins and the other the C/Y proteins.</text>
</comment>
<comment type="similarity">
    <text evidence="5">Belongs to the paramyxoviruses V protein family.</text>
</comment>
<feature type="chain" id="PRO_0000142826" description="Protein V">
    <location>
        <begin position="1"/>
        <end position="384"/>
    </location>
</feature>
<feature type="region of interest" description="Disordered" evidence="4">
    <location>
        <begin position="1"/>
        <end position="23"/>
    </location>
</feature>
<feature type="region of interest" description="Disordered" evidence="4">
    <location>
        <begin position="38"/>
        <end position="317"/>
    </location>
</feature>
<feature type="compositionally biased region" description="Basic and acidic residues" evidence="4">
    <location>
        <begin position="7"/>
        <end position="20"/>
    </location>
</feature>
<feature type="compositionally biased region" description="Polar residues" evidence="4">
    <location>
        <begin position="50"/>
        <end position="59"/>
    </location>
</feature>
<feature type="compositionally biased region" description="Basic and acidic residues" evidence="4">
    <location>
        <begin position="83"/>
        <end position="101"/>
    </location>
</feature>
<feature type="compositionally biased region" description="Basic and acidic residues" evidence="4">
    <location>
        <begin position="150"/>
        <end position="168"/>
    </location>
</feature>
<feature type="compositionally biased region" description="Polar residues" evidence="4">
    <location>
        <begin position="191"/>
        <end position="206"/>
    </location>
</feature>
<feature type="binding site" evidence="1">
    <location>
        <position position="318"/>
    </location>
    <ligand>
        <name>Zn(2+)</name>
        <dbReference type="ChEBI" id="CHEBI:29105"/>
        <label>1</label>
    </ligand>
</feature>
<feature type="binding site" evidence="1">
    <location>
        <position position="337"/>
    </location>
    <ligand>
        <name>Zn(2+)</name>
        <dbReference type="ChEBI" id="CHEBI:29105"/>
        <label>1</label>
    </ligand>
</feature>
<feature type="binding site" evidence="1">
    <location>
        <position position="341"/>
    </location>
    <ligand>
        <name>Zn(2+)</name>
        <dbReference type="ChEBI" id="CHEBI:29105"/>
        <label>2</label>
    </ligand>
</feature>
<feature type="binding site" evidence="1">
    <location>
        <position position="353"/>
    </location>
    <ligand>
        <name>Zn(2+)</name>
        <dbReference type="ChEBI" id="CHEBI:29105"/>
        <label>2</label>
    </ligand>
</feature>
<feature type="binding site" evidence="1">
    <location>
        <position position="355"/>
    </location>
    <ligand>
        <name>Zn(2+)</name>
        <dbReference type="ChEBI" id="CHEBI:29105"/>
        <label>2</label>
    </ligand>
</feature>
<feature type="binding site" evidence="1">
    <location>
        <position position="358"/>
    </location>
    <ligand>
        <name>Zn(2+)</name>
        <dbReference type="ChEBI" id="CHEBI:29105"/>
        <label>2</label>
    </ligand>
</feature>
<feature type="binding site" evidence="1">
    <location>
        <position position="362"/>
    </location>
    <ligand>
        <name>Zn(2+)</name>
        <dbReference type="ChEBI" id="CHEBI:29105"/>
        <label>1</label>
    </ligand>
</feature>
<feature type="binding site" evidence="1">
    <location>
        <position position="365"/>
    </location>
    <ligand>
        <name>Zn(2+)</name>
        <dbReference type="ChEBI" id="CHEBI:29105"/>
        <label>1</label>
    </ligand>
</feature>
<feature type="modified residue" description="Phosphoserine; by host" evidence="1">
    <location>
        <position position="68"/>
    </location>
</feature>
<feature type="modified residue" description="Phosphoserine; by host" evidence="1">
    <location>
        <position position="125"/>
    </location>
</feature>
<feature type="modified residue" description="Phosphoserine; by host" evidence="1">
    <location>
        <position position="192"/>
    </location>
</feature>
<feature type="modified residue" description="Phosphoserine; by host" evidence="1">
    <location>
        <position position="249"/>
    </location>
</feature>
<feature type="modified residue" description="Phosphoserine; by host" evidence="1">
    <location>
        <position position="257"/>
    </location>
</feature>
<feature type="modified residue" description="Phosphoserine; by host" evidence="1">
    <location>
        <position position="260"/>
    </location>
</feature>